<keyword id="KW-0007">Acetylation</keyword>
<keyword id="KW-0256">Endoplasmic reticulum</keyword>
<keyword id="KW-0472">Membrane</keyword>
<keyword id="KW-0597">Phosphoprotein</keyword>
<keyword id="KW-0653">Protein transport</keyword>
<keyword id="KW-1185">Reference proteome</keyword>
<keyword id="KW-0812">Transmembrane</keyword>
<keyword id="KW-1133">Transmembrane helix</keyword>
<keyword id="KW-0813">Transport</keyword>
<keyword id="KW-0834">Unfolded protein response</keyword>
<comment type="function">
    <text evidence="2">Functional component of endoplasmic reticulum-associated degradation (ERAD) for misfolded lumenal proteins. Forms homotetramers which encircle a large channel traversing the endoplasmic reticulum (ER) membrane. This allows the retrotranslocation of misfolded proteins from the ER into the cytosol where they are ubiquitinated and degraded by the proteasome. The channel has a lateral gate within the membrane which provides direct access to membrane proteins with no need to reenter the ER lumen first. May mediate the interaction between VCP and the misfolded protein. Also involved in endoplasmic reticulum stress-induced pre-emptive quality control, a mechanism that selectively attenuates the translocation of newly synthesized proteins into the endoplasmic reticulum and reroutes them to the cytosol for proteasomal degradation. By controlling the steady-state expression of the IGF1R receptor, indirectly regulates the insulin-like growth factor receptor signaling pathway.</text>
</comment>
<comment type="subunit">
    <text evidence="1 2">Homotetramer. The four subunits of the tetramer are arranged in a twofold symmetry. Forms homo- and heterooligomers with DERL2 and DERL3; binding to DERL3 is poorer than that between DERL2 and DERL3. Interacts (via SHP-box motif) with VCP. Interacts with AMFR, SELENOS, SEL1L, SELENOK and SYVN1, as well as with SEL1L-SYVN1 and VCP-SELENOS protein complexes; this interaction is weaker than that observed between DERL2 and these complexes. Interacts with NGLY1 and YOD1. Does not bind to EDEM1. Interacts with DNAJB9. Interacts with RNF103. Interacts with HM13. Interacts with XBP1 isoform 1 (via luminal/ectodomain domain); the interaction obviates the need for ectodomain shedding prior HM13/SPP-mediated XBP1 isoform 1 cleavage. Interacts with the signal recognition particle/SRP and the SRP receptor; in the process of endoplasmic reticulum stress-induced pre-emptive quality control. May interact with UBXN6. Interacts with ZFAND2B; probably through VCP. Interacts with CCDC47. Interacts with C18orf32. May interact with TRAM1. Forms a complex with SVIP and VCP/p97 (By similarity).</text>
</comment>
<comment type="subcellular location">
    <subcellularLocation>
        <location evidence="2">Endoplasmic reticulum membrane</location>
        <topology evidence="2">Multi-pass membrane protein</topology>
    </subcellularLocation>
</comment>
<comment type="similarity">
    <text evidence="4">Belongs to the derlin family.</text>
</comment>
<evidence type="ECO:0000250" key="1">
    <source>
        <dbReference type="UniProtKB" id="Q99J56"/>
    </source>
</evidence>
<evidence type="ECO:0000250" key="2">
    <source>
        <dbReference type="UniProtKB" id="Q9BUN8"/>
    </source>
</evidence>
<evidence type="ECO:0000256" key="3">
    <source>
        <dbReference type="SAM" id="MobiDB-lite"/>
    </source>
</evidence>
<evidence type="ECO:0000305" key="4"/>
<organism>
    <name type="scientific">Bos taurus</name>
    <name type="common">Bovine</name>
    <dbReference type="NCBI Taxonomy" id="9913"/>
    <lineage>
        <taxon>Eukaryota</taxon>
        <taxon>Metazoa</taxon>
        <taxon>Chordata</taxon>
        <taxon>Craniata</taxon>
        <taxon>Vertebrata</taxon>
        <taxon>Euteleostomi</taxon>
        <taxon>Mammalia</taxon>
        <taxon>Eutheria</taxon>
        <taxon>Laurasiatheria</taxon>
        <taxon>Artiodactyla</taxon>
        <taxon>Ruminantia</taxon>
        <taxon>Pecora</taxon>
        <taxon>Bovidae</taxon>
        <taxon>Bovinae</taxon>
        <taxon>Bos</taxon>
    </lineage>
</organism>
<name>DERL1_BOVIN</name>
<protein>
    <recommendedName>
        <fullName evidence="4">Derlin-1</fullName>
    </recommendedName>
    <alternativeName>
        <fullName evidence="2">Der1-like protein 1</fullName>
    </alternativeName>
</protein>
<sequence length="251" mass="28865">MSDIGDWFRSIPTITRYWFAATVAVPLVGKLGLISPAYFFLWPEAFLYRFQIWRPITATFYFPVGPGTGFLYLVNLYFLYQYSTRLETGAFDGRPADYLFMLLFNWICIVITGLAMDMQLLMIPLIMSVLYVWAQLNRDMIVSFWFGTRFKACYLPWVILGFNYIIGGSVINELIGNLVGHLYFFLMFRYPMDLGGRNFLSTPQFLYRWLPSRRGGVSGFGVPPASMRRAADQNGGGGRHNWGQGFRLGDQ</sequence>
<feature type="initiator methionine" description="Removed" evidence="2">
    <location>
        <position position="1"/>
    </location>
</feature>
<feature type="chain" id="PRO_0000219041" description="Derlin-1">
    <location>
        <begin position="2"/>
        <end position="251"/>
    </location>
</feature>
<feature type="topological domain" description="Cytoplasmic" evidence="2">
    <location>
        <begin position="2"/>
        <end position="15"/>
    </location>
</feature>
<feature type="transmembrane region" description="Helical; Name=1" evidence="2">
    <location>
        <begin position="16"/>
        <end position="31"/>
    </location>
</feature>
<feature type="topological domain" description="Lumenal" evidence="2">
    <location>
        <begin position="32"/>
        <end position="69"/>
    </location>
</feature>
<feature type="transmembrane region" description="Helical; Name=2" evidence="2">
    <location>
        <begin position="70"/>
        <end position="89"/>
    </location>
</feature>
<feature type="topological domain" description="Cytoplasmic" evidence="2">
    <location>
        <begin position="90"/>
        <end position="94"/>
    </location>
</feature>
<feature type="transmembrane region" description="Helical; Name=3" evidence="2">
    <location>
        <begin position="95"/>
        <end position="115"/>
    </location>
</feature>
<feature type="topological domain" description="Lumenal" evidence="2">
    <location>
        <begin position="116"/>
        <end position="122"/>
    </location>
</feature>
<feature type="transmembrane region" description="Helical; Name=4" evidence="2">
    <location>
        <begin position="123"/>
        <end position="137"/>
    </location>
</feature>
<feature type="topological domain" description="Cytoplasmic" evidence="2">
    <location>
        <begin position="138"/>
        <end position="154"/>
    </location>
</feature>
<feature type="transmembrane region" description="Helical; Name=5" evidence="2">
    <location>
        <begin position="155"/>
        <end position="166"/>
    </location>
</feature>
<feature type="topological domain" description="Lumenal" evidence="2">
    <location>
        <begin position="167"/>
        <end position="170"/>
    </location>
</feature>
<feature type="transmembrane region" description="Helical; Name=6" evidence="2">
    <location>
        <begin position="171"/>
        <end position="189"/>
    </location>
</feature>
<feature type="topological domain" description="Cytoplasmic" evidence="2">
    <location>
        <begin position="190"/>
        <end position="251"/>
    </location>
</feature>
<feature type="region of interest" description="Disordered" evidence="3">
    <location>
        <begin position="229"/>
        <end position="251"/>
    </location>
</feature>
<feature type="short sequence motif" description="SHP-box" evidence="2">
    <location>
        <begin position="241"/>
        <end position="248"/>
    </location>
</feature>
<feature type="modified residue" description="N-acetylserine" evidence="2">
    <location>
        <position position="2"/>
    </location>
</feature>
<feature type="modified residue" description="Phosphoserine" evidence="2">
    <location>
        <position position="201"/>
    </location>
</feature>
<feature type="modified residue" description="Phosphothreonine" evidence="2">
    <location>
        <position position="202"/>
    </location>
</feature>
<feature type="modified residue" description="Phosphoserine" evidence="2">
    <location>
        <position position="226"/>
    </location>
</feature>
<gene>
    <name evidence="2" type="primary">DERL1</name>
</gene>
<dbReference type="EMBL" id="AF279909">
    <property type="protein sequence ID" value="AAQ14320.1"/>
    <property type="molecule type" value="mRNA"/>
</dbReference>
<dbReference type="EMBL" id="BT025490">
    <property type="protein sequence ID" value="ABF57446.1"/>
    <property type="molecule type" value="mRNA"/>
</dbReference>
<dbReference type="EMBL" id="BC114645">
    <property type="protein sequence ID" value="AAI14646.1"/>
    <property type="molecule type" value="mRNA"/>
</dbReference>
<dbReference type="RefSeq" id="NP_991358.1">
    <property type="nucleotide sequence ID" value="NM_205789.1"/>
</dbReference>
<dbReference type="SMR" id="Q71SS4"/>
<dbReference type="FunCoup" id="Q71SS4">
    <property type="interactions" value="2269"/>
</dbReference>
<dbReference type="STRING" id="9913.ENSBTAP00000070517"/>
<dbReference type="PaxDb" id="9913-ENSBTAP00000044932"/>
<dbReference type="Ensembl" id="ENSBTAT00000079315.1">
    <property type="protein sequence ID" value="ENSBTAP00000070517.1"/>
    <property type="gene ID" value="ENSBTAG00000020693.7"/>
</dbReference>
<dbReference type="GeneID" id="404121"/>
<dbReference type="KEGG" id="bta:404121"/>
<dbReference type="CTD" id="79139"/>
<dbReference type="VEuPathDB" id="HostDB:ENSBTAG00000020693"/>
<dbReference type="VGNC" id="VGNC:28010">
    <property type="gene designation" value="DERL1"/>
</dbReference>
<dbReference type="eggNOG" id="KOG0858">
    <property type="taxonomic scope" value="Eukaryota"/>
</dbReference>
<dbReference type="GeneTree" id="ENSGT00530000063156"/>
<dbReference type="InParanoid" id="Q71SS4"/>
<dbReference type="OMA" id="LWRCVTS"/>
<dbReference type="OrthoDB" id="19102at2759"/>
<dbReference type="Reactome" id="R-BTA-382556">
    <property type="pathway name" value="ABC-family proteins mediated transport"/>
</dbReference>
<dbReference type="Reactome" id="R-BTA-532668">
    <property type="pathway name" value="N-glycan trimming in the ER and Calnexin/Calreticulin cycle"/>
</dbReference>
<dbReference type="Proteomes" id="UP000009136">
    <property type="component" value="Chromosome 14"/>
</dbReference>
<dbReference type="Bgee" id="ENSBTAG00000020693">
    <property type="expression patterns" value="Expressed in diaphragm and 102 other cell types or tissues"/>
</dbReference>
<dbReference type="GO" id="GO:0036513">
    <property type="term" value="C:Derlin-1 retrotranslocation complex"/>
    <property type="evidence" value="ECO:0007669"/>
    <property type="project" value="Ensembl"/>
</dbReference>
<dbReference type="GO" id="GO:0036502">
    <property type="term" value="C:Derlin-1-VIMP complex"/>
    <property type="evidence" value="ECO:0007669"/>
    <property type="project" value="Ensembl"/>
</dbReference>
<dbReference type="GO" id="GO:0005769">
    <property type="term" value="C:early endosome"/>
    <property type="evidence" value="ECO:0007669"/>
    <property type="project" value="Ensembl"/>
</dbReference>
<dbReference type="GO" id="GO:0005789">
    <property type="term" value="C:endoplasmic reticulum membrane"/>
    <property type="evidence" value="ECO:0000318"/>
    <property type="project" value="GO_Central"/>
</dbReference>
<dbReference type="GO" id="GO:0044322">
    <property type="term" value="C:endoplasmic reticulum quality control compartment"/>
    <property type="evidence" value="ECO:0007669"/>
    <property type="project" value="Ensembl"/>
</dbReference>
<dbReference type="GO" id="GO:0005770">
    <property type="term" value="C:late endosome"/>
    <property type="evidence" value="ECO:0007669"/>
    <property type="project" value="Ensembl"/>
</dbReference>
<dbReference type="GO" id="GO:0051117">
    <property type="term" value="F:ATPase binding"/>
    <property type="evidence" value="ECO:0000250"/>
    <property type="project" value="UniProtKB"/>
</dbReference>
<dbReference type="GO" id="GO:0042802">
    <property type="term" value="F:identical protein binding"/>
    <property type="evidence" value="ECO:0007669"/>
    <property type="project" value="Ensembl"/>
</dbReference>
<dbReference type="GO" id="GO:0042288">
    <property type="term" value="F:MHC class I protein binding"/>
    <property type="evidence" value="ECO:0007669"/>
    <property type="project" value="Ensembl"/>
</dbReference>
<dbReference type="GO" id="GO:0005047">
    <property type="term" value="F:signal recognition particle binding"/>
    <property type="evidence" value="ECO:0000250"/>
    <property type="project" value="UniProtKB"/>
</dbReference>
<dbReference type="GO" id="GO:0031625">
    <property type="term" value="F:ubiquitin protein ligase binding"/>
    <property type="evidence" value="ECO:0007669"/>
    <property type="project" value="Ensembl"/>
</dbReference>
<dbReference type="GO" id="GO:1990381">
    <property type="term" value="F:ubiquitin-specific protease binding"/>
    <property type="evidence" value="ECO:0007669"/>
    <property type="project" value="Ensembl"/>
</dbReference>
<dbReference type="GO" id="GO:0071218">
    <property type="term" value="P:cellular response to misfolded protein"/>
    <property type="evidence" value="ECO:0007669"/>
    <property type="project" value="Ensembl"/>
</dbReference>
<dbReference type="GO" id="GO:0030968">
    <property type="term" value="P:endoplasmic reticulum unfolded protein response"/>
    <property type="evidence" value="ECO:0000318"/>
    <property type="project" value="GO_Central"/>
</dbReference>
<dbReference type="GO" id="GO:0036503">
    <property type="term" value="P:ERAD pathway"/>
    <property type="evidence" value="ECO:0000318"/>
    <property type="project" value="GO_Central"/>
</dbReference>
<dbReference type="GO" id="GO:0031398">
    <property type="term" value="P:positive regulation of protein ubiquitination"/>
    <property type="evidence" value="ECO:0007669"/>
    <property type="project" value="Ensembl"/>
</dbReference>
<dbReference type="GO" id="GO:0043161">
    <property type="term" value="P:proteasome-mediated ubiquitin-dependent protein catabolic process"/>
    <property type="evidence" value="ECO:0007669"/>
    <property type="project" value="Ensembl"/>
</dbReference>
<dbReference type="GO" id="GO:0031648">
    <property type="term" value="P:protein destabilization"/>
    <property type="evidence" value="ECO:0000250"/>
    <property type="project" value="UniProtKB"/>
</dbReference>
<dbReference type="GO" id="GO:0030970">
    <property type="term" value="P:retrograde protein transport, ER to cytosol"/>
    <property type="evidence" value="ECO:0007669"/>
    <property type="project" value="Ensembl"/>
</dbReference>
<dbReference type="InterPro" id="IPR007599">
    <property type="entry name" value="DER1"/>
</dbReference>
<dbReference type="InterPro" id="IPR035952">
    <property type="entry name" value="Rhomboid-like_sf"/>
</dbReference>
<dbReference type="PANTHER" id="PTHR11009">
    <property type="entry name" value="DER1-LIKE PROTEIN, DERLIN"/>
    <property type="match status" value="1"/>
</dbReference>
<dbReference type="Pfam" id="PF04511">
    <property type="entry name" value="DER1"/>
    <property type="match status" value="1"/>
</dbReference>
<dbReference type="SUPFAM" id="SSF144091">
    <property type="entry name" value="Rhomboid-like"/>
    <property type="match status" value="1"/>
</dbReference>
<proteinExistence type="evidence at transcript level"/>
<reference key="1">
    <citation type="submission" date="2000-06" db="EMBL/GenBank/DDBJ databases">
        <authorList>
            <person name="Ndiaye K."/>
            <person name="Vermette L."/>
            <person name="Silversides D."/>
            <person name="Sirois J."/>
            <person name="Lussier J.G."/>
        </authorList>
    </citation>
    <scope>NUCLEOTIDE SEQUENCE [MRNA]</scope>
</reference>
<reference key="2">
    <citation type="submission" date="2006-04" db="EMBL/GenBank/DDBJ databases">
        <authorList>
            <consortium name="NIH - Mammalian Gene Collection (MGC) project"/>
        </authorList>
    </citation>
    <scope>NUCLEOTIDE SEQUENCE [LARGE SCALE MRNA]</scope>
    <source>
        <strain>Hereford</strain>
        <tissue>Uterus</tissue>
    </source>
</reference>
<reference key="3">
    <citation type="journal article" date="2005" name="BMC Genomics">
        <title>Characterization of 954 bovine full-CDS cDNA sequences.</title>
        <authorList>
            <person name="Harhay G.P."/>
            <person name="Sonstegard T.S."/>
            <person name="Keele J.W."/>
            <person name="Heaton M.P."/>
            <person name="Clawson M.L."/>
            <person name="Snelling W.M."/>
            <person name="Wiedmann R.T."/>
            <person name="Van Tassell C.P."/>
            <person name="Smith T.P.L."/>
        </authorList>
    </citation>
    <scope>NUCLEOTIDE SEQUENCE [LARGE SCALE MRNA]</scope>
</reference>
<accession>Q71SS4</accession>
<accession>Q1RMX8</accession>